<evidence type="ECO:0000250" key="1">
    <source>
        <dbReference type="UniProtKB" id="Q9NVQ4"/>
    </source>
</evidence>
<evidence type="ECO:0000269" key="2">
    <source>
    </source>
</evidence>
<evidence type="ECO:0000269" key="3">
    <source>
    </source>
</evidence>
<evidence type="ECO:0000305" key="4"/>
<evidence type="ECO:0007829" key="5">
    <source>
        <dbReference type="PDB" id="2KD2"/>
    </source>
</evidence>
<gene>
    <name type="primary">Faim</name>
    <name type="synonym">Faim1</name>
</gene>
<proteinExistence type="evidence at protein level"/>
<dbReference type="EMBL" id="AF130367">
    <property type="protein sequence ID" value="AAD23879.1"/>
    <property type="molecule type" value="mRNA"/>
</dbReference>
<dbReference type="EMBL" id="AK005762">
    <property type="protein sequence ID" value="BAB24225.1"/>
    <property type="molecule type" value="mRNA"/>
</dbReference>
<dbReference type="EMBL" id="BC079662">
    <property type="protein sequence ID" value="AAH79662.1"/>
    <property type="molecule type" value="mRNA"/>
</dbReference>
<dbReference type="CCDS" id="CCDS23431.1"/>
<dbReference type="RefSeq" id="NP_001116323.1">
    <property type="nucleotide sequence ID" value="NM_001122851.1"/>
</dbReference>
<dbReference type="RefSeq" id="NP_035940.3">
    <property type="nucleotide sequence ID" value="NM_011810.3"/>
</dbReference>
<dbReference type="PDB" id="2KD2">
    <property type="method" value="NMR"/>
    <property type="chains" value="A=91-179"/>
</dbReference>
<dbReference type="PDBsum" id="2KD2"/>
<dbReference type="BMRB" id="Q9WUD8"/>
<dbReference type="SMR" id="Q9WUD8"/>
<dbReference type="BioGRID" id="204767">
    <property type="interactions" value="1"/>
</dbReference>
<dbReference type="FunCoup" id="Q9WUD8">
    <property type="interactions" value="965"/>
</dbReference>
<dbReference type="STRING" id="10090.ENSMUSP00000108532"/>
<dbReference type="PhosphoSitePlus" id="Q9WUD8"/>
<dbReference type="jPOST" id="Q9WUD8"/>
<dbReference type="PaxDb" id="10090-ENSMUSP00000108532"/>
<dbReference type="ProteomicsDB" id="271721"/>
<dbReference type="Pumba" id="Q9WUD8"/>
<dbReference type="Ensembl" id="ENSMUST00000035038.8">
    <property type="protein sequence ID" value="ENSMUSP00000035038.2"/>
    <property type="gene ID" value="ENSMUSG00000032463.11"/>
</dbReference>
<dbReference type="GeneID" id="23873"/>
<dbReference type="KEGG" id="mmu:23873"/>
<dbReference type="UCSC" id="uc009rdt.2">
    <property type="organism name" value="mouse"/>
</dbReference>
<dbReference type="AGR" id="MGI:1344387"/>
<dbReference type="CTD" id="55179"/>
<dbReference type="MGI" id="MGI:1344387">
    <property type="gene designation" value="Faim"/>
</dbReference>
<dbReference type="VEuPathDB" id="HostDB:ENSMUSG00000032463"/>
<dbReference type="eggNOG" id="KOG4352">
    <property type="taxonomic scope" value="Eukaryota"/>
</dbReference>
<dbReference type="GeneTree" id="ENSGT00390000007364"/>
<dbReference type="InParanoid" id="Q9WUD8"/>
<dbReference type="OMA" id="SQEYRIM"/>
<dbReference type="OrthoDB" id="6262731at2759"/>
<dbReference type="PhylomeDB" id="Q9WUD8"/>
<dbReference type="BioGRID-ORCS" id="23873">
    <property type="hits" value="1 hit in 76 CRISPR screens"/>
</dbReference>
<dbReference type="ChiTaRS" id="Faim">
    <property type="organism name" value="mouse"/>
</dbReference>
<dbReference type="EvolutionaryTrace" id="Q9WUD8"/>
<dbReference type="PRO" id="PR:Q9WUD8"/>
<dbReference type="Proteomes" id="UP000000589">
    <property type="component" value="Chromosome 9"/>
</dbReference>
<dbReference type="RNAct" id="Q9WUD8">
    <property type="molecule type" value="protein"/>
</dbReference>
<dbReference type="Bgee" id="ENSMUSG00000032463">
    <property type="expression patterns" value="Expressed in retinal neural layer and 249 other cell types or tissues"/>
</dbReference>
<dbReference type="ExpressionAtlas" id="Q9WUD8">
    <property type="expression patterns" value="baseline and differential"/>
</dbReference>
<dbReference type="GO" id="GO:0005737">
    <property type="term" value="C:cytoplasm"/>
    <property type="evidence" value="ECO:0007669"/>
    <property type="project" value="UniProtKB-SubCell"/>
</dbReference>
<dbReference type="GO" id="GO:0006915">
    <property type="term" value="P:apoptotic process"/>
    <property type="evidence" value="ECO:0007669"/>
    <property type="project" value="UniProtKB-KW"/>
</dbReference>
<dbReference type="GO" id="GO:1902042">
    <property type="term" value="P:negative regulation of extrinsic apoptotic signaling pathway via death domain receptors"/>
    <property type="evidence" value="ECO:0000314"/>
    <property type="project" value="MGI"/>
</dbReference>
<dbReference type="GO" id="GO:0043123">
    <property type="term" value="P:positive regulation of canonical NF-kappaB signal transduction"/>
    <property type="evidence" value="ECO:0007669"/>
    <property type="project" value="Ensembl"/>
</dbReference>
<dbReference type="GO" id="GO:0050769">
    <property type="term" value="P:positive regulation of neurogenesis"/>
    <property type="evidence" value="ECO:0007669"/>
    <property type="project" value="Ensembl"/>
</dbReference>
<dbReference type="FunFam" id="2.40.128.180:FF:000001">
    <property type="entry name" value="Fas apoptotic inhibitory molecule 1"/>
    <property type="match status" value="1"/>
</dbReference>
<dbReference type="FunFam" id="2.40.128.180:FF:000002">
    <property type="entry name" value="Fas apoptotic inhibitory molecule 1"/>
    <property type="match status" value="1"/>
</dbReference>
<dbReference type="Gene3D" id="2.40.128.180">
    <property type="match status" value="2"/>
</dbReference>
<dbReference type="InterPro" id="IPR010695">
    <property type="entry name" value="FAIM1"/>
</dbReference>
<dbReference type="InterPro" id="IPR038513">
    <property type="entry name" value="FAIM1_dom_sf"/>
</dbReference>
<dbReference type="PANTHER" id="PTHR13088:SF4">
    <property type="entry name" value="FAS APOPTOTIC INHIBITORY MOLECULE 1"/>
    <property type="match status" value="1"/>
</dbReference>
<dbReference type="PANTHER" id="PTHR13088">
    <property type="entry name" value="FAS APOPTOTIC INHIBITORY MOLECULE FAIM"/>
    <property type="match status" value="1"/>
</dbReference>
<dbReference type="Pfam" id="PF06905">
    <property type="entry name" value="FAIM1"/>
    <property type="match status" value="1"/>
</dbReference>
<accession>Q9WUD8</accession>
<accession>Q9DAK6</accession>
<protein>
    <recommendedName>
        <fullName>Fas apoptotic inhibitory molecule 1</fullName>
    </recommendedName>
</protein>
<reference key="1">
    <citation type="journal article" date="1999" name="J. Exp. Med.">
        <title>A novel gene coding for a Fas apoptosis inhibitory molecule (FAIM) isolated from inducibly Fas-resistant B lymphocytes.</title>
        <authorList>
            <person name="Schneider T.J."/>
            <person name="Fischer G.M."/>
            <person name="Donohoe T.J."/>
            <person name="Colarusso T.P."/>
            <person name="Rothstein T.L."/>
        </authorList>
    </citation>
    <scope>NUCLEOTIDE SEQUENCE [MRNA]</scope>
    <scope>FUNCTION</scope>
    <scope>TISSUE SPECIFICITY</scope>
    <source>
        <tissue>Thymus</tissue>
    </source>
</reference>
<reference key="2">
    <citation type="journal article" date="2005" name="Science">
        <title>The transcriptional landscape of the mammalian genome.</title>
        <authorList>
            <person name="Carninci P."/>
            <person name="Kasukawa T."/>
            <person name="Katayama S."/>
            <person name="Gough J."/>
            <person name="Frith M.C."/>
            <person name="Maeda N."/>
            <person name="Oyama R."/>
            <person name="Ravasi T."/>
            <person name="Lenhard B."/>
            <person name="Wells C."/>
            <person name="Kodzius R."/>
            <person name="Shimokawa K."/>
            <person name="Bajic V.B."/>
            <person name="Brenner S.E."/>
            <person name="Batalov S."/>
            <person name="Forrest A.R."/>
            <person name="Zavolan M."/>
            <person name="Davis M.J."/>
            <person name="Wilming L.G."/>
            <person name="Aidinis V."/>
            <person name="Allen J.E."/>
            <person name="Ambesi-Impiombato A."/>
            <person name="Apweiler R."/>
            <person name="Aturaliya R.N."/>
            <person name="Bailey T.L."/>
            <person name="Bansal M."/>
            <person name="Baxter L."/>
            <person name="Beisel K.W."/>
            <person name="Bersano T."/>
            <person name="Bono H."/>
            <person name="Chalk A.M."/>
            <person name="Chiu K.P."/>
            <person name="Choudhary V."/>
            <person name="Christoffels A."/>
            <person name="Clutterbuck D.R."/>
            <person name="Crowe M.L."/>
            <person name="Dalla E."/>
            <person name="Dalrymple B.P."/>
            <person name="de Bono B."/>
            <person name="Della Gatta G."/>
            <person name="di Bernardo D."/>
            <person name="Down T."/>
            <person name="Engstrom P."/>
            <person name="Fagiolini M."/>
            <person name="Faulkner G."/>
            <person name="Fletcher C.F."/>
            <person name="Fukushima T."/>
            <person name="Furuno M."/>
            <person name="Futaki S."/>
            <person name="Gariboldi M."/>
            <person name="Georgii-Hemming P."/>
            <person name="Gingeras T.R."/>
            <person name="Gojobori T."/>
            <person name="Green R.E."/>
            <person name="Gustincich S."/>
            <person name="Harbers M."/>
            <person name="Hayashi Y."/>
            <person name="Hensch T.K."/>
            <person name="Hirokawa N."/>
            <person name="Hill D."/>
            <person name="Huminiecki L."/>
            <person name="Iacono M."/>
            <person name="Ikeo K."/>
            <person name="Iwama A."/>
            <person name="Ishikawa T."/>
            <person name="Jakt M."/>
            <person name="Kanapin A."/>
            <person name="Katoh M."/>
            <person name="Kawasawa Y."/>
            <person name="Kelso J."/>
            <person name="Kitamura H."/>
            <person name="Kitano H."/>
            <person name="Kollias G."/>
            <person name="Krishnan S.P."/>
            <person name="Kruger A."/>
            <person name="Kummerfeld S.K."/>
            <person name="Kurochkin I.V."/>
            <person name="Lareau L.F."/>
            <person name="Lazarevic D."/>
            <person name="Lipovich L."/>
            <person name="Liu J."/>
            <person name="Liuni S."/>
            <person name="McWilliam S."/>
            <person name="Madan Babu M."/>
            <person name="Madera M."/>
            <person name="Marchionni L."/>
            <person name="Matsuda H."/>
            <person name="Matsuzawa S."/>
            <person name="Miki H."/>
            <person name="Mignone F."/>
            <person name="Miyake S."/>
            <person name="Morris K."/>
            <person name="Mottagui-Tabar S."/>
            <person name="Mulder N."/>
            <person name="Nakano N."/>
            <person name="Nakauchi H."/>
            <person name="Ng P."/>
            <person name="Nilsson R."/>
            <person name="Nishiguchi S."/>
            <person name="Nishikawa S."/>
            <person name="Nori F."/>
            <person name="Ohara O."/>
            <person name="Okazaki Y."/>
            <person name="Orlando V."/>
            <person name="Pang K.C."/>
            <person name="Pavan W.J."/>
            <person name="Pavesi G."/>
            <person name="Pesole G."/>
            <person name="Petrovsky N."/>
            <person name="Piazza S."/>
            <person name="Reed J."/>
            <person name="Reid J.F."/>
            <person name="Ring B.Z."/>
            <person name="Ringwald M."/>
            <person name="Rost B."/>
            <person name="Ruan Y."/>
            <person name="Salzberg S.L."/>
            <person name="Sandelin A."/>
            <person name="Schneider C."/>
            <person name="Schoenbach C."/>
            <person name="Sekiguchi K."/>
            <person name="Semple C.A."/>
            <person name="Seno S."/>
            <person name="Sessa L."/>
            <person name="Sheng Y."/>
            <person name="Shibata Y."/>
            <person name="Shimada H."/>
            <person name="Shimada K."/>
            <person name="Silva D."/>
            <person name="Sinclair B."/>
            <person name="Sperling S."/>
            <person name="Stupka E."/>
            <person name="Sugiura K."/>
            <person name="Sultana R."/>
            <person name="Takenaka Y."/>
            <person name="Taki K."/>
            <person name="Tammoja K."/>
            <person name="Tan S.L."/>
            <person name="Tang S."/>
            <person name="Taylor M.S."/>
            <person name="Tegner J."/>
            <person name="Teichmann S.A."/>
            <person name="Ueda H.R."/>
            <person name="van Nimwegen E."/>
            <person name="Verardo R."/>
            <person name="Wei C.L."/>
            <person name="Yagi K."/>
            <person name="Yamanishi H."/>
            <person name="Zabarovsky E."/>
            <person name="Zhu S."/>
            <person name="Zimmer A."/>
            <person name="Hide W."/>
            <person name="Bult C."/>
            <person name="Grimmond S.M."/>
            <person name="Teasdale R.D."/>
            <person name="Liu E.T."/>
            <person name="Brusic V."/>
            <person name="Quackenbush J."/>
            <person name="Wahlestedt C."/>
            <person name="Mattick J.S."/>
            <person name="Hume D.A."/>
            <person name="Kai C."/>
            <person name="Sasaki D."/>
            <person name="Tomaru Y."/>
            <person name="Fukuda S."/>
            <person name="Kanamori-Katayama M."/>
            <person name="Suzuki M."/>
            <person name="Aoki J."/>
            <person name="Arakawa T."/>
            <person name="Iida J."/>
            <person name="Imamura K."/>
            <person name="Itoh M."/>
            <person name="Kato T."/>
            <person name="Kawaji H."/>
            <person name="Kawagashira N."/>
            <person name="Kawashima T."/>
            <person name="Kojima M."/>
            <person name="Kondo S."/>
            <person name="Konno H."/>
            <person name="Nakano K."/>
            <person name="Ninomiya N."/>
            <person name="Nishio T."/>
            <person name="Okada M."/>
            <person name="Plessy C."/>
            <person name="Shibata K."/>
            <person name="Shiraki T."/>
            <person name="Suzuki S."/>
            <person name="Tagami M."/>
            <person name="Waki K."/>
            <person name="Watahiki A."/>
            <person name="Okamura-Oho Y."/>
            <person name="Suzuki H."/>
            <person name="Kawai J."/>
            <person name="Hayashizaki Y."/>
        </authorList>
    </citation>
    <scope>NUCLEOTIDE SEQUENCE [LARGE SCALE MRNA]</scope>
    <source>
        <strain>C57BL/6J</strain>
        <tissue>Testis</tissue>
    </source>
</reference>
<reference key="3">
    <citation type="journal article" date="2004" name="Genome Res.">
        <title>The status, quality, and expansion of the NIH full-length cDNA project: the Mammalian Gene Collection (MGC).</title>
        <authorList>
            <consortium name="The MGC Project Team"/>
        </authorList>
    </citation>
    <scope>NUCLEOTIDE SEQUENCE [LARGE SCALE MRNA]</scope>
    <source>
        <strain>C57BL/6J</strain>
        <tissue>Brain</tissue>
    </source>
</reference>
<reference key="4">
    <citation type="journal article" date="2010" name="Cell">
        <title>A tissue-specific atlas of mouse protein phosphorylation and expression.</title>
        <authorList>
            <person name="Huttlin E.L."/>
            <person name="Jedrychowski M.P."/>
            <person name="Elias J.E."/>
            <person name="Goswami T."/>
            <person name="Rad R."/>
            <person name="Beausoleil S.A."/>
            <person name="Villen J."/>
            <person name="Haas W."/>
            <person name="Sowa M.E."/>
            <person name="Gygi S.P."/>
        </authorList>
    </citation>
    <scope>IDENTIFICATION BY MASS SPECTROMETRY [LARGE SCALE ANALYSIS]</scope>
    <source>
        <tissue>Brain</tissue>
        <tissue>Testis</tissue>
    </source>
</reference>
<reference key="5">
    <citation type="journal article" date="2009" name="J. Mol. Biol.">
        <title>Fas apoptosis inhibitory molecule contains a novel beta-sandwich in contact with a partially ordered domain.</title>
        <authorList>
            <person name="Hemond M."/>
            <person name="Rothstein T.L."/>
            <person name="Wagner G."/>
        </authorList>
    </citation>
    <scope>STRUCTURE BY NMR OF 91-179</scope>
    <scope>SUBCELLULAR LOCATION</scope>
</reference>
<organism>
    <name type="scientific">Mus musculus</name>
    <name type="common">Mouse</name>
    <dbReference type="NCBI Taxonomy" id="10090"/>
    <lineage>
        <taxon>Eukaryota</taxon>
        <taxon>Metazoa</taxon>
        <taxon>Chordata</taxon>
        <taxon>Craniata</taxon>
        <taxon>Vertebrata</taxon>
        <taxon>Euteleostomi</taxon>
        <taxon>Mammalia</taxon>
        <taxon>Eutheria</taxon>
        <taxon>Euarchontoglires</taxon>
        <taxon>Glires</taxon>
        <taxon>Rodentia</taxon>
        <taxon>Myomorpha</taxon>
        <taxon>Muroidea</taxon>
        <taxon>Muridae</taxon>
        <taxon>Murinae</taxon>
        <taxon>Mus</taxon>
        <taxon>Mus</taxon>
    </lineage>
</organism>
<sequence length="179" mass="20201">MTDLVAVWDVALSDGVHKIEFEHGTTSGKRVVYVDGKEEIRREWMFKLVGKETFFVGAAKTKATINIDAISGFAYEYTLEIDGKSLKKYMENRSKTTSTWVLRLDGEDLRVVLEKDTMDVWCNGQKMETAGEFVDDGTETHFSVGNHGCYIKAVSSGKRKEGIIHTLIVDNREIPELTQ</sequence>
<name>FAIM1_MOUSE</name>
<keyword id="KW-0002">3D-structure</keyword>
<keyword id="KW-0007">Acetylation</keyword>
<keyword id="KW-0053">Apoptosis</keyword>
<keyword id="KW-0963">Cytoplasm</keyword>
<keyword id="KW-1185">Reference proteome</keyword>
<feature type="initiator methionine" description="Removed" evidence="1">
    <location>
        <position position="1"/>
    </location>
</feature>
<feature type="chain" id="PRO_0000087174" description="Fas apoptotic inhibitory molecule 1">
    <location>
        <begin position="2"/>
        <end position="179"/>
    </location>
</feature>
<feature type="modified residue" description="N-acetylthreonine" evidence="1">
    <location>
        <position position="2"/>
    </location>
</feature>
<feature type="sequence conflict" description="In Ref. 2; BAB24225." evidence="4" ref="2">
    <original>G</original>
    <variation>R</variation>
    <location>
        <position position="157"/>
    </location>
</feature>
<feature type="strand" evidence="5">
    <location>
        <begin position="97"/>
        <end position="104"/>
    </location>
</feature>
<feature type="strand" evidence="5">
    <location>
        <begin position="107"/>
        <end position="114"/>
    </location>
</feature>
<feature type="turn" evidence="5">
    <location>
        <begin position="115"/>
        <end position="118"/>
    </location>
</feature>
<feature type="strand" evidence="5">
    <location>
        <begin position="119"/>
        <end position="126"/>
    </location>
</feature>
<feature type="strand" evidence="5">
    <location>
        <begin position="135"/>
        <end position="144"/>
    </location>
</feature>
<feature type="strand" evidence="5">
    <location>
        <begin position="147"/>
        <end position="171"/>
    </location>
</feature>
<comment type="function">
    <text evidence="2">Plays a role as an inducible effector molecule that mediates Fas resistance produced by surface Ig engagement in B cells.</text>
</comment>
<comment type="subcellular location">
    <subcellularLocation>
        <location evidence="3">Cytoplasm</location>
    </subcellularLocation>
</comment>
<comment type="tissue specificity">
    <text evidence="2">Widely expressed, with the highest levels in brain, thymus, kidney, and spleen.</text>
</comment>
<comment type="similarity">
    <text evidence="4">Belongs to the FAIM1 family.</text>
</comment>